<organism>
    <name type="scientific">Arabidopsis thaliana</name>
    <name type="common">Mouse-ear cress</name>
    <dbReference type="NCBI Taxonomy" id="3702"/>
    <lineage>
        <taxon>Eukaryota</taxon>
        <taxon>Viridiplantae</taxon>
        <taxon>Streptophyta</taxon>
        <taxon>Embryophyta</taxon>
        <taxon>Tracheophyta</taxon>
        <taxon>Spermatophyta</taxon>
        <taxon>Magnoliopsida</taxon>
        <taxon>eudicotyledons</taxon>
        <taxon>Gunneridae</taxon>
        <taxon>Pentapetalae</taxon>
        <taxon>rosids</taxon>
        <taxon>malvids</taxon>
        <taxon>Brassicales</taxon>
        <taxon>Brassicaceae</taxon>
        <taxon>Camelineae</taxon>
        <taxon>Arabidopsis</taxon>
    </lineage>
</organism>
<evidence type="ECO:0000255" key="1">
    <source>
        <dbReference type="PROSITE-ProRule" id="PRU00248"/>
    </source>
</evidence>
<evidence type="ECO:0000255" key="2">
    <source>
        <dbReference type="PROSITE-ProRule" id="PRU00397"/>
    </source>
</evidence>
<evidence type="ECO:0000255" key="3">
    <source>
        <dbReference type="PROSITE-ProRule" id="PRU01227"/>
    </source>
</evidence>
<evidence type="ECO:0000256" key="4">
    <source>
        <dbReference type="SAM" id="MobiDB-lite"/>
    </source>
</evidence>
<evidence type="ECO:0000269" key="5">
    <source>
    </source>
</evidence>
<evidence type="ECO:0000269" key="6">
    <source>
    </source>
</evidence>
<evidence type="ECO:0000269" key="7">
    <source>
    </source>
</evidence>
<evidence type="ECO:0000269" key="8">
    <source>
    </source>
</evidence>
<evidence type="ECO:0000269" key="9">
    <source>
    </source>
</evidence>
<evidence type="ECO:0000269" key="10">
    <source>
    </source>
</evidence>
<evidence type="ECO:0000269" key="11">
    <source>
    </source>
</evidence>
<evidence type="ECO:0000269" key="12">
    <source>
    </source>
</evidence>
<evidence type="ECO:0000269" key="13">
    <source>
    </source>
</evidence>
<evidence type="ECO:0000269" key="14">
    <source>
    </source>
</evidence>
<evidence type="ECO:0000269" key="15">
    <source>
    </source>
</evidence>
<evidence type="ECO:0000269" key="16">
    <source>
    </source>
</evidence>
<evidence type="ECO:0000269" key="17">
    <source>
    </source>
</evidence>
<evidence type="ECO:0000269" key="18">
    <source>
    </source>
</evidence>
<evidence type="ECO:0000303" key="19">
    <source>
    </source>
</evidence>
<evidence type="ECO:0000303" key="20">
    <source>
    </source>
</evidence>
<evidence type="ECO:0000305" key="21"/>
<evidence type="ECO:0007829" key="22">
    <source>
        <dbReference type="PDB" id="5N9Q"/>
    </source>
</evidence>
<evidence type="ECO:0007829" key="23">
    <source>
        <dbReference type="PDB" id="5NGO"/>
    </source>
</evidence>
<protein>
    <recommendedName>
        <fullName>Inactive poly [ADP-ribose] polymerase RCD1</fullName>
    </recommendedName>
    <alternativeName>
        <fullName>Protein RADICAL-INDUCED CELL DEATH 1</fullName>
    </alternativeName>
</protein>
<comment type="function">
    <text evidence="5 6 8 9 10 11 12 13 16 17">Inactive ADP-ribosyltransferase that functions with SRO1 to regulate oxidative stress, hormonal and developmental responses. Required for embryogenesis, vegetative and reproductive development, and abiotic stress responses. May regulate several stress-responsive genes. Seems to play a larger developmental role than SRO1. Does not bind NAD in vitro.</text>
</comment>
<comment type="subunit">
    <text evidence="5 7 12 18">Interacts with the transcription factors NAC013/NTL1 and NAC046 (PubMed:25348421). Interacts with dehydration-responsive DREB2 proteins and a number of transcription factors belonging to several protein families. Interacts with turnip crinkle virus (TCV) movement protein P8.</text>
</comment>
<comment type="interaction">
    <interactant intactId="EBI-2118043">
        <id>Q8RY59</id>
    </interactant>
    <interactant intactId="EBI-763232">
        <id>O80931</id>
        <label>AS1</label>
    </interactant>
    <organismsDiffer>false</organismsDiffer>
    <experiments>2</experiments>
</comment>
<comment type="interaction">
    <interactant intactId="EBI-2118043">
        <id>Q8RY59</id>
    </interactant>
    <interactant intactId="EBI-631943">
        <id>Q96288</id>
        <label>BBX24</label>
    </interactant>
    <organismsDiffer>false</organismsDiffer>
    <experiments>4</experiments>
</comment>
<comment type="interaction">
    <interactant intactId="EBI-2118043">
        <id>Q8RY59</id>
    </interactant>
    <interactant intactId="EBI-2434870">
        <id>Q9LUA9</id>
        <label>COL10</label>
    </interactant>
    <organismsDiffer>false</organismsDiffer>
    <experiments>3</experiments>
</comment>
<comment type="interaction">
    <interactant intactId="EBI-2118043">
        <id>Q8RY59</id>
    </interactant>
    <interactant intactId="EBI-1786840">
        <id>O82132</id>
        <label>DREB2A</label>
    </interactant>
    <organismsDiffer>false</organismsDiffer>
    <experiments>3</experiments>
</comment>
<comment type="interaction">
    <interactant intactId="EBI-2118043">
        <id>Q8RY59</id>
    </interactant>
    <interactant intactId="EBI-2368285">
        <id>Q9LKW9</id>
        <label>NHX7</label>
    </interactant>
    <organismsDiffer>false</organismsDiffer>
    <experiments>5</experiments>
</comment>
<comment type="subcellular location">
    <subcellularLocation>
        <location evidence="11 12">Nucleus matrix</location>
    </subcellularLocation>
    <text>Speckle-like pattern.</text>
</comment>
<comment type="alternative products">
    <event type="alternative splicing"/>
    <isoform>
        <id>Q8RY59-1</id>
        <name>1</name>
        <sequence type="displayed"/>
    </isoform>
    <isoform>
        <id>Q8RY59-2</id>
        <name>2</name>
        <sequence type="described" ref="VSP_041441"/>
    </isoform>
</comment>
<comment type="tissue specificity">
    <text evidence="5 6 12 17">Expressed in young developing tissues, such as young leaves and flowers and root tips. In mature plants, expressed in vasculature of leaves and roots, and guard cells.</text>
</comment>
<comment type="developmental stage">
    <text evidence="17">Expressed in the embryo proper at the globular stage. Expressed in the embryo until the torpedo stage, after which expression within the procambial strands becomes pronounced.</text>
</comment>
<comment type="induction">
    <text evidence="6 14 16">By ozone, salt stress and cadmium.</text>
</comment>
<comment type="disruption phenotype">
    <text evidence="6 8 9 10 12 15 17">Small plants, altered leaf shape and early flowering. Plants lacking RCD1 show enhanced resistance to methyl viologen, tolerance to freezing and supplementary UV-B irradiation, reduced sensitivity to abscisic acid, ethylene and jasmonate, increased sensitivity to ozone and up-regulation of reactive oxygen species scavenging enzymes.</text>
</comment>
<comment type="miscellaneous">
    <text>Plants overexpressing RCD1 show a weak rcd1 mutant phenotype.</text>
</comment>
<comment type="miscellaneous">
    <molecule>Isoform 2</molecule>
    <text evidence="21">May be due to a competing acceptor splice site.</text>
</comment>
<comment type="caution">
    <text evidence="21">Lacks the conserved catalytic triad His-Tyr-Glu of the active site.</text>
</comment>
<comment type="sequence caution" evidence="21">
    <conflict type="miscellaneous discrepancy">
        <sequence resource="EMBL-CDS" id="AAK54509"/>
    </conflict>
    <text>Sequencing errors.</text>
</comment>
<feature type="chain" id="PRO_0000410418" description="Inactive poly [ADP-ribose] polymerase RCD1">
    <location>
        <begin position="1"/>
        <end position="589"/>
    </location>
</feature>
<feature type="domain" description="WWE" evidence="1">
    <location>
        <begin position="64"/>
        <end position="153"/>
    </location>
</feature>
<feature type="domain" description="PARP catalytic" evidence="2">
    <location>
        <begin position="248"/>
        <end position="469"/>
    </location>
</feature>
<feature type="domain" description="RST" evidence="3">
    <location>
        <begin position="501"/>
        <end position="572"/>
    </location>
</feature>
<feature type="region of interest" description="Disordered" evidence="4">
    <location>
        <begin position="464"/>
        <end position="504"/>
    </location>
</feature>
<feature type="region of interest" description="Disordered" evidence="4">
    <location>
        <begin position="569"/>
        <end position="589"/>
    </location>
</feature>
<feature type="compositionally biased region" description="Polar residues" evidence="4">
    <location>
        <begin position="481"/>
        <end position="503"/>
    </location>
</feature>
<feature type="compositionally biased region" description="Basic and acidic residues" evidence="4">
    <location>
        <begin position="571"/>
        <end position="589"/>
    </location>
</feature>
<feature type="splice variant" id="VSP_041441" description="In isoform 2." evidence="19 20">
    <location>
        <position position="485"/>
    </location>
</feature>
<feature type="sequence conflict" description="In Ref. 1; CAC14428." evidence="21" ref="1">
    <original>A</original>
    <variation>V</variation>
    <location>
        <position position="522"/>
    </location>
</feature>
<feature type="helix" evidence="23">
    <location>
        <begin position="275"/>
        <end position="285"/>
    </location>
</feature>
<feature type="helix" evidence="23">
    <location>
        <begin position="286"/>
        <end position="289"/>
    </location>
</feature>
<feature type="strand" evidence="23">
    <location>
        <begin position="294"/>
        <end position="299"/>
    </location>
</feature>
<feature type="helix" evidence="23">
    <location>
        <begin position="303"/>
        <end position="323"/>
    </location>
</feature>
<feature type="strand" evidence="23">
    <location>
        <begin position="328"/>
        <end position="334"/>
    </location>
</feature>
<feature type="helix" evidence="23">
    <location>
        <begin position="337"/>
        <end position="339"/>
    </location>
</feature>
<feature type="turn" evidence="23">
    <location>
        <begin position="340"/>
        <end position="342"/>
    </location>
</feature>
<feature type="helix" evidence="23">
    <location>
        <begin position="343"/>
        <end position="346"/>
    </location>
</feature>
<feature type="strand" evidence="23">
    <location>
        <begin position="362"/>
        <end position="368"/>
    </location>
</feature>
<feature type="helix" evidence="23">
    <location>
        <begin position="372"/>
        <end position="374"/>
    </location>
</feature>
<feature type="helix" evidence="23">
    <location>
        <begin position="376"/>
        <end position="378"/>
    </location>
</feature>
<feature type="strand" evidence="23">
    <location>
        <begin position="387"/>
        <end position="395"/>
    </location>
</feature>
<feature type="strand" evidence="23">
    <location>
        <begin position="418"/>
        <end position="421"/>
    </location>
</feature>
<feature type="strand" evidence="23">
    <location>
        <begin position="423"/>
        <end position="425"/>
    </location>
</feature>
<feature type="strand" evidence="23">
    <location>
        <begin position="428"/>
        <end position="431"/>
    </location>
</feature>
<feature type="helix" evidence="23">
    <location>
        <begin position="433"/>
        <end position="435"/>
    </location>
</feature>
<feature type="turn" evidence="23">
    <location>
        <begin position="436"/>
        <end position="438"/>
    </location>
</feature>
<feature type="strand" evidence="23">
    <location>
        <begin position="439"/>
        <end position="448"/>
    </location>
</feature>
<feature type="strand" evidence="22">
    <location>
        <begin position="504"/>
        <end position="506"/>
    </location>
</feature>
<feature type="helix" evidence="22">
    <location>
        <begin position="510"/>
        <end position="517"/>
    </location>
</feature>
<feature type="turn" evidence="22">
    <location>
        <begin position="518"/>
        <end position="520"/>
    </location>
</feature>
<feature type="helix" evidence="22">
    <location>
        <begin position="523"/>
        <end position="537"/>
    </location>
</feature>
<feature type="helix" evidence="22">
    <location>
        <begin position="543"/>
        <end position="550"/>
    </location>
</feature>
<feature type="turn" evidence="22">
    <location>
        <begin position="551"/>
        <end position="553"/>
    </location>
</feature>
<feature type="helix" evidence="22">
    <location>
        <begin position="556"/>
        <end position="566"/>
    </location>
</feature>
<accession>Q8RY59</accession>
<accession>Q93YR6</accession>
<accession>Q94KU0</accession>
<accession>Q9FT85</accession>
<accession>Q9FVR7</accession>
<name>RCD1_ARATH</name>
<sequence>MEAKIVKVLDSSRCEDGFGKKRKRAASYAAYVTGVSCAKLQNVPPPNGQCQIPDKRRRLEGENKLSAYENRSGKALVRYYTYFKKTGIAKRVMMYENGEWNDLPEHVICAIQNELEEKSAAIEFKLCGHSFILDFLHMQRLDMETGAKTPLAWIDNAGKCFFPEIYESDERTNYCHHKCVEDPKQNAPHDIKLRLEIDVNGGETPRLNLEECSDESGDNMMDDVPLAQRSSNEHYDEATEDSCSRKLEAAVSKWDETDAIVVSGAKLTGSEVLDKDAVKKMFAVGTASLGHVPVLDVGRFSSEIAEARLALFQKQVEITKKHRGDANVRYAWLPAKREVLSAVMMQGLGVGGAFIRKSIYGVGIHLTAADCPYFSARYCDVDENGVRYMVLCRVIMGNMELLRGDKAQFFSGGEEYDNGVDDIESPKNYIVWNINMNTHIFPEFVVRFKLSNLPNAEGNLIAKRDNSGVTLEGPKDLPPQLESNQGARGSGSANSVGSSTTRPKSPWMPFPTLFAAISHKVAENDMLLINADYQQLRDKKMTRAEFVRKLRVIVGDDLLRSTITTLQNQPKSKEIPGSIRDHEEGAGGL</sequence>
<dbReference type="EMBL" id="AJ251578">
    <property type="protein sequence ID" value="CAC14428.1"/>
    <property type="molecule type" value="mRNA"/>
</dbReference>
<dbReference type="EMBL" id="AF317898">
    <property type="protein sequence ID" value="AAK54509.1"/>
    <property type="status" value="ALT_SEQ"/>
    <property type="molecule type" value="mRNA"/>
</dbReference>
<dbReference type="EMBL" id="AY578788">
    <property type="protein sequence ID" value="AAS91732.1"/>
    <property type="molecule type" value="Genomic_DNA"/>
</dbReference>
<dbReference type="EMBL" id="AC084165">
    <property type="protein sequence ID" value="AAG23444.1"/>
    <property type="molecule type" value="Genomic_DNA"/>
</dbReference>
<dbReference type="EMBL" id="CP002684">
    <property type="protein sequence ID" value="AEE31452.1"/>
    <property type="molecule type" value="Genomic_DNA"/>
</dbReference>
<dbReference type="EMBL" id="CP002684">
    <property type="protein sequence ID" value="AEE31453.1"/>
    <property type="molecule type" value="Genomic_DNA"/>
</dbReference>
<dbReference type="EMBL" id="CP002684">
    <property type="protein sequence ID" value="ANM57850.1"/>
    <property type="molecule type" value="Genomic_DNA"/>
</dbReference>
<dbReference type="EMBL" id="CP002684">
    <property type="protein sequence ID" value="ANM57851.1"/>
    <property type="molecule type" value="Genomic_DNA"/>
</dbReference>
<dbReference type="EMBL" id="CP002684">
    <property type="protein sequence ID" value="ANM57852.1"/>
    <property type="molecule type" value="Genomic_DNA"/>
</dbReference>
<dbReference type="EMBL" id="AY059796">
    <property type="protein sequence ID" value="AAL24144.1"/>
    <property type="molecule type" value="mRNA"/>
</dbReference>
<dbReference type="EMBL" id="AY075633">
    <property type="protein sequence ID" value="AAL91641.1"/>
    <property type="molecule type" value="mRNA"/>
</dbReference>
<dbReference type="EMBL" id="AY142655">
    <property type="protein sequence ID" value="AAN13193.1"/>
    <property type="molecule type" value="mRNA"/>
</dbReference>
<dbReference type="PIR" id="H86446">
    <property type="entry name" value="H86446"/>
</dbReference>
<dbReference type="RefSeq" id="NP_001320330.1">
    <molecule id="Q8RY59-2"/>
    <property type="nucleotide sequence ID" value="NM_001333000.1"/>
</dbReference>
<dbReference type="RefSeq" id="NP_001320331.1">
    <molecule id="Q8RY59-2"/>
    <property type="nucleotide sequence ID" value="NM_001332998.1"/>
</dbReference>
<dbReference type="RefSeq" id="NP_001320332.1">
    <molecule id="Q8RY59-2"/>
    <property type="nucleotide sequence ID" value="NM_001332999.1"/>
</dbReference>
<dbReference type="RefSeq" id="NP_564391.1">
    <molecule id="Q8RY59-1"/>
    <property type="nucleotide sequence ID" value="NM_102956.3"/>
</dbReference>
<dbReference type="RefSeq" id="NP_849739.1">
    <molecule id="Q8RY59-2"/>
    <property type="nucleotide sequence ID" value="NM_179408.3"/>
</dbReference>
<dbReference type="PDB" id="5N9Q">
    <property type="method" value="NMR"/>
    <property type="chains" value="A=468-589"/>
</dbReference>
<dbReference type="PDB" id="5NGO">
    <property type="method" value="X-ray"/>
    <property type="resolution" value="2.50 A"/>
    <property type="chains" value="A/B/C/D/E/F/G/H=269-460"/>
</dbReference>
<dbReference type="PDB" id="5OAO">
    <property type="method" value="NMR"/>
    <property type="chains" value="A=500-572"/>
</dbReference>
<dbReference type="PDBsum" id="5N9Q"/>
<dbReference type="PDBsum" id="5NGO"/>
<dbReference type="PDBsum" id="5OAO"/>
<dbReference type="SMR" id="Q8RY59"/>
<dbReference type="BioGRID" id="25349">
    <property type="interactions" value="34"/>
</dbReference>
<dbReference type="DIP" id="DIP-52884N"/>
<dbReference type="FunCoup" id="Q8RY59">
    <property type="interactions" value="2262"/>
</dbReference>
<dbReference type="IntAct" id="Q8RY59">
    <property type="interactions" value="30"/>
</dbReference>
<dbReference type="STRING" id="3702.Q8RY59"/>
<dbReference type="PaxDb" id="3702-AT1G32230.1"/>
<dbReference type="ProteomicsDB" id="236536">
    <molecule id="Q8RY59-1"/>
</dbReference>
<dbReference type="EnsemblPlants" id="AT1G32230.1">
    <molecule id="Q8RY59-1"/>
    <property type="protein sequence ID" value="AT1G32230.1"/>
    <property type="gene ID" value="AT1G32230"/>
</dbReference>
<dbReference type="EnsemblPlants" id="AT1G32230.2">
    <molecule id="Q8RY59-2"/>
    <property type="protein sequence ID" value="AT1G32230.2"/>
    <property type="gene ID" value="AT1G32230"/>
</dbReference>
<dbReference type="EnsemblPlants" id="AT1G32230.4">
    <molecule id="Q8RY59-2"/>
    <property type="protein sequence ID" value="AT1G32230.4"/>
    <property type="gene ID" value="AT1G32230"/>
</dbReference>
<dbReference type="EnsemblPlants" id="AT1G32230.5">
    <molecule id="Q8RY59-2"/>
    <property type="protein sequence ID" value="AT1G32230.5"/>
    <property type="gene ID" value="AT1G32230"/>
</dbReference>
<dbReference type="EnsemblPlants" id="AT1G32230.6">
    <molecule id="Q8RY59-2"/>
    <property type="protein sequence ID" value="AT1G32230.6"/>
    <property type="gene ID" value="AT1G32230"/>
</dbReference>
<dbReference type="GeneID" id="840115"/>
<dbReference type="Gramene" id="AT1G32230.1">
    <molecule id="Q8RY59-1"/>
    <property type="protein sequence ID" value="AT1G32230.1"/>
    <property type="gene ID" value="AT1G32230"/>
</dbReference>
<dbReference type="Gramene" id="AT1G32230.2">
    <molecule id="Q8RY59-2"/>
    <property type="protein sequence ID" value="AT1G32230.2"/>
    <property type="gene ID" value="AT1G32230"/>
</dbReference>
<dbReference type="Gramene" id="AT1G32230.4">
    <molecule id="Q8RY59-2"/>
    <property type="protein sequence ID" value="AT1G32230.4"/>
    <property type="gene ID" value="AT1G32230"/>
</dbReference>
<dbReference type="Gramene" id="AT1G32230.5">
    <molecule id="Q8RY59-2"/>
    <property type="protein sequence ID" value="AT1G32230.5"/>
    <property type="gene ID" value="AT1G32230"/>
</dbReference>
<dbReference type="Gramene" id="AT1G32230.6">
    <molecule id="Q8RY59-2"/>
    <property type="protein sequence ID" value="AT1G32230.6"/>
    <property type="gene ID" value="AT1G32230"/>
</dbReference>
<dbReference type="KEGG" id="ath:AT1G32230"/>
<dbReference type="Araport" id="AT1G32230"/>
<dbReference type="TAIR" id="AT1G32230">
    <property type="gene designation" value="RCD1"/>
</dbReference>
<dbReference type="eggNOG" id="ENOG502QZEX">
    <property type="taxonomic scope" value="Eukaryota"/>
</dbReference>
<dbReference type="InParanoid" id="Q8RY59"/>
<dbReference type="PhylomeDB" id="Q8RY59"/>
<dbReference type="PRO" id="PR:Q8RY59"/>
<dbReference type="Proteomes" id="UP000006548">
    <property type="component" value="Chromosome 1"/>
</dbReference>
<dbReference type="ExpressionAtlas" id="Q8RY59">
    <property type="expression patterns" value="baseline and differential"/>
</dbReference>
<dbReference type="GO" id="GO:0005737">
    <property type="term" value="C:cytoplasm"/>
    <property type="evidence" value="ECO:0000314"/>
    <property type="project" value="TAIR"/>
</dbReference>
<dbReference type="GO" id="GO:0016363">
    <property type="term" value="C:nuclear matrix"/>
    <property type="evidence" value="ECO:0007669"/>
    <property type="project" value="UniProtKB-SubCell"/>
</dbReference>
<dbReference type="GO" id="GO:0005634">
    <property type="term" value="C:nucleus"/>
    <property type="evidence" value="ECO:0000314"/>
    <property type="project" value="TAIR"/>
</dbReference>
<dbReference type="GO" id="GO:0003950">
    <property type="term" value="F:NAD+ poly-ADP-ribosyltransferase activity"/>
    <property type="evidence" value="ECO:0007669"/>
    <property type="project" value="InterPro"/>
</dbReference>
<dbReference type="GO" id="GO:0042742">
    <property type="term" value="P:defense response to bacterium"/>
    <property type="evidence" value="ECO:0000315"/>
    <property type="project" value="TAIR"/>
</dbReference>
<dbReference type="GO" id="GO:0009793">
    <property type="term" value="P:embryo development ending in seed dormancy"/>
    <property type="evidence" value="ECO:0000315"/>
    <property type="project" value="TAIR"/>
</dbReference>
<dbReference type="GO" id="GO:0009873">
    <property type="term" value="P:ethylene-activated signaling pathway"/>
    <property type="evidence" value="ECO:0000315"/>
    <property type="project" value="TAIR"/>
</dbReference>
<dbReference type="GO" id="GO:0009867">
    <property type="term" value="P:jasmonic acid mediated signaling pathway"/>
    <property type="evidence" value="ECO:0000315"/>
    <property type="project" value="TAIR"/>
</dbReference>
<dbReference type="GO" id="GO:0010102">
    <property type="term" value="P:lateral root morphogenesis"/>
    <property type="evidence" value="ECO:0000315"/>
    <property type="project" value="TAIR"/>
</dbReference>
<dbReference type="GO" id="GO:0006809">
    <property type="term" value="P:nitric oxide biosynthetic process"/>
    <property type="evidence" value="ECO:0000315"/>
    <property type="project" value="TAIR"/>
</dbReference>
<dbReference type="GO" id="GO:0012501">
    <property type="term" value="P:programmed cell death"/>
    <property type="evidence" value="ECO:0000315"/>
    <property type="project" value="TAIR"/>
</dbReference>
<dbReference type="GO" id="GO:2000377">
    <property type="term" value="P:regulation of reactive oxygen species metabolic process"/>
    <property type="evidence" value="ECO:0000315"/>
    <property type="project" value="TAIR"/>
</dbReference>
<dbReference type="GO" id="GO:0009723">
    <property type="term" value="P:response to ethylene"/>
    <property type="evidence" value="ECO:0000315"/>
    <property type="project" value="TAIR"/>
</dbReference>
<dbReference type="GO" id="GO:0006970">
    <property type="term" value="P:response to osmotic stress"/>
    <property type="evidence" value="ECO:0000315"/>
    <property type="project" value="TAIR"/>
</dbReference>
<dbReference type="GO" id="GO:0010193">
    <property type="term" value="P:response to ozone"/>
    <property type="evidence" value="ECO:0000315"/>
    <property type="project" value="TAIR"/>
</dbReference>
<dbReference type="GO" id="GO:0009651">
    <property type="term" value="P:response to salt stress"/>
    <property type="evidence" value="ECO:0000315"/>
    <property type="project" value="TAIR"/>
</dbReference>
<dbReference type="GO" id="GO:0000303">
    <property type="term" value="P:response to superoxide"/>
    <property type="evidence" value="ECO:0000315"/>
    <property type="project" value="TAIR"/>
</dbReference>
<dbReference type="GO" id="GO:0009414">
    <property type="term" value="P:response to water deprivation"/>
    <property type="evidence" value="ECO:0000315"/>
    <property type="project" value="TAIR"/>
</dbReference>
<dbReference type="DisProt" id="DP01180"/>
<dbReference type="FunFam" id="3.90.228.10:FF:000014">
    <property type="entry name" value="Poly [ADP-ribose] polymerase"/>
    <property type="match status" value="1"/>
</dbReference>
<dbReference type="Gene3D" id="3.90.228.10">
    <property type="match status" value="1"/>
</dbReference>
<dbReference type="InterPro" id="IPR012317">
    <property type="entry name" value="Poly(ADP-ribose)pol_cat_dom"/>
</dbReference>
<dbReference type="InterPro" id="IPR044964">
    <property type="entry name" value="RCD1/SRO1-5"/>
</dbReference>
<dbReference type="InterPro" id="IPR022003">
    <property type="entry name" value="RST"/>
</dbReference>
<dbReference type="InterPro" id="IPR004170">
    <property type="entry name" value="WWE_dom"/>
</dbReference>
<dbReference type="PANTHER" id="PTHR32263:SF15">
    <property type="entry name" value="INACTIVE POLY [ADP-RIBOSE] POLYMERASE RCD1"/>
    <property type="match status" value="1"/>
</dbReference>
<dbReference type="PANTHER" id="PTHR32263">
    <property type="entry name" value="INACTIVE POLY [ADP-RIBOSE] POLYMERASE SRO4-RELATED"/>
    <property type="match status" value="1"/>
</dbReference>
<dbReference type="Pfam" id="PF00644">
    <property type="entry name" value="PARP"/>
    <property type="match status" value="1"/>
</dbReference>
<dbReference type="Pfam" id="PF12174">
    <property type="entry name" value="RST"/>
    <property type="match status" value="1"/>
</dbReference>
<dbReference type="Pfam" id="PF23467">
    <property type="entry name" value="WWE_5"/>
    <property type="match status" value="1"/>
</dbReference>
<dbReference type="SUPFAM" id="SSF56399">
    <property type="entry name" value="ADP-ribosylation"/>
    <property type="match status" value="1"/>
</dbReference>
<dbReference type="PROSITE" id="PS51059">
    <property type="entry name" value="PARP_CATALYTIC"/>
    <property type="match status" value="1"/>
</dbReference>
<dbReference type="PROSITE" id="PS51879">
    <property type="entry name" value="RST"/>
    <property type="match status" value="1"/>
</dbReference>
<dbReference type="PROSITE" id="PS50918">
    <property type="entry name" value="WWE"/>
    <property type="match status" value="1"/>
</dbReference>
<reference key="1">
    <citation type="journal article" date="2000" name="FEBS Lett.">
        <title>CEO1, a new protein from Arabidopsis thaliana, protects yeast against oxidative damage.</title>
        <authorList>
            <person name="Belles-Boix E."/>
            <person name="Babiychuk E."/>
            <person name="Van Montagu M."/>
            <person name="Inze D."/>
            <person name="Kushnir S."/>
        </authorList>
    </citation>
    <scope>NUCLEOTIDE SEQUENCE [MRNA] (ISOFORM 1)</scope>
    <scope>FUNCTION</scope>
    <scope>SUBUNIT</scope>
    <scope>TISSUE SPECIFICITY</scope>
</reference>
<reference key="2">
    <citation type="journal article" date="2001" name="J. Gen. Virol.">
        <title>An Arabidopsis thaliana protein interacts with a movement protein of Turnip crinkle virus in yeast cells and in vitro.</title>
        <authorList>
            <person name="Lin B."/>
            <person name="Heaton L.A."/>
        </authorList>
    </citation>
    <scope>NUCLEOTIDE SEQUENCE [MRNA] (ISOFORM 2)</scope>
    <scope>INTERACTION WITH TURNIP CRINKLE VIRUS MOVEMENT PROTEIN P8</scope>
</reference>
<reference key="3">
    <citation type="journal article" date="2004" name="Plant Cell">
        <title>Arabidopsis RADICAL-INDUCED CELL DEATH1 belongs to the WWE protein-protein interaction domain protein family and modulates abscisic acid, ethylene, and methyl jasmonate responses.</title>
        <authorList>
            <person name="Ahlfors R."/>
            <person name="Lang S."/>
            <person name="Overmyer K."/>
            <person name="Jaspers P."/>
            <person name="Brosche M."/>
            <person name="Tauriainen A."/>
            <person name="Kollist H."/>
            <person name="Tuominen H."/>
            <person name="Belles-Boix E."/>
            <person name="Piippo M."/>
            <person name="Inze D."/>
            <person name="Palva E.T."/>
            <person name="Kangasjarvi J."/>
        </authorList>
    </citation>
    <scope>NUCLEOTIDE SEQUENCE [GENOMIC DNA]</scope>
    <scope>FUNCTION</scope>
    <scope>DISRUPTION PHENOTYPE</scope>
    <source>
        <strain>cv. Columbia</strain>
    </source>
</reference>
<reference key="4">
    <citation type="journal article" date="2000" name="Nature">
        <title>Sequence and analysis of chromosome 1 of the plant Arabidopsis thaliana.</title>
        <authorList>
            <person name="Theologis A."/>
            <person name="Ecker J.R."/>
            <person name="Palm C.J."/>
            <person name="Federspiel N.A."/>
            <person name="Kaul S."/>
            <person name="White O."/>
            <person name="Alonso J."/>
            <person name="Altafi H."/>
            <person name="Araujo R."/>
            <person name="Bowman C.L."/>
            <person name="Brooks S.Y."/>
            <person name="Buehler E."/>
            <person name="Chan A."/>
            <person name="Chao Q."/>
            <person name="Chen H."/>
            <person name="Cheuk R.F."/>
            <person name="Chin C.W."/>
            <person name="Chung M.K."/>
            <person name="Conn L."/>
            <person name="Conway A.B."/>
            <person name="Conway A.R."/>
            <person name="Creasy T.H."/>
            <person name="Dewar K."/>
            <person name="Dunn P."/>
            <person name="Etgu P."/>
            <person name="Feldblyum T.V."/>
            <person name="Feng J.-D."/>
            <person name="Fong B."/>
            <person name="Fujii C.Y."/>
            <person name="Gill J.E."/>
            <person name="Goldsmith A.D."/>
            <person name="Haas B."/>
            <person name="Hansen N.F."/>
            <person name="Hughes B."/>
            <person name="Huizar L."/>
            <person name="Hunter J.L."/>
            <person name="Jenkins J."/>
            <person name="Johnson-Hopson C."/>
            <person name="Khan S."/>
            <person name="Khaykin E."/>
            <person name="Kim C.J."/>
            <person name="Koo H.L."/>
            <person name="Kremenetskaia I."/>
            <person name="Kurtz D.B."/>
            <person name="Kwan A."/>
            <person name="Lam B."/>
            <person name="Langin-Hooper S."/>
            <person name="Lee A."/>
            <person name="Lee J.M."/>
            <person name="Lenz C.A."/>
            <person name="Li J.H."/>
            <person name="Li Y.-P."/>
            <person name="Lin X."/>
            <person name="Liu S.X."/>
            <person name="Liu Z.A."/>
            <person name="Luros J.S."/>
            <person name="Maiti R."/>
            <person name="Marziali A."/>
            <person name="Militscher J."/>
            <person name="Miranda M."/>
            <person name="Nguyen M."/>
            <person name="Nierman W.C."/>
            <person name="Osborne B.I."/>
            <person name="Pai G."/>
            <person name="Peterson J."/>
            <person name="Pham P.K."/>
            <person name="Rizzo M."/>
            <person name="Rooney T."/>
            <person name="Rowley D."/>
            <person name="Sakano H."/>
            <person name="Salzberg S.L."/>
            <person name="Schwartz J.R."/>
            <person name="Shinn P."/>
            <person name="Southwick A.M."/>
            <person name="Sun H."/>
            <person name="Tallon L.J."/>
            <person name="Tambunga G."/>
            <person name="Toriumi M.J."/>
            <person name="Town C.D."/>
            <person name="Utterback T."/>
            <person name="Van Aken S."/>
            <person name="Vaysberg M."/>
            <person name="Vysotskaia V.S."/>
            <person name="Walker M."/>
            <person name="Wu D."/>
            <person name="Yu G."/>
            <person name="Fraser C.M."/>
            <person name="Venter J.C."/>
            <person name="Davis R.W."/>
        </authorList>
    </citation>
    <scope>NUCLEOTIDE SEQUENCE [LARGE SCALE GENOMIC DNA]</scope>
    <source>
        <strain>cv. Columbia</strain>
    </source>
</reference>
<reference key="5">
    <citation type="journal article" date="2017" name="Plant J.">
        <title>Araport11: a complete reannotation of the Arabidopsis thaliana reference genome.</title>
        <authorList>
            <person name="Cheng C.Y."/>
            <person name="Krishnakumar V."/>
            <person name="Chan A.P."/>
            <person name="Thibaud-Nissen F."/>
            <person name="Schobel S."/>
            <person name="Town C.D."/>
        </authorList>
    </citation>
    <scope>GENOME REANNOTATION</scope>
    <source>
        <strain>cv. Columbia</strain>
    </source>
</reference>
<reference key="6">
    <citation type="journal article" date="2003" name="Science">
        <title>Empirical analysis of transcriptional activity in the Arabidopsis genome.</title>
        <authorList>
            <person name="Yamada K."/>
            <person name="Lim J."/>
            <person name="Dale J.M."/>
            <person name="Chen H."/>
            <person name="Shinn P."/>
            <person name="Palm C.J."/>
            <person name="Southwick A.M."/>
            <person name="Wu H.C."/>
            <person name="Kim C.J."/>
            <person name="Nguyen M."/>
            <person name="Pham P.K."/>
            <person name="Cheuk R.F."/>
            <person name="Karlin-Newmann G."/>
            <person name="Liu S.X."/>
            <person name="Lam B."/>
            <person name="Sakano H."/>
            <person name="Wu T."/>
            <person name="Yu G."/>
            <person name="Miranda M."/>
            <person name="Quach H.L."/>
            <person name="Tripp M."/>
            <person name="Chang C.H."/>
            <person name="Lee J.M."/>
            <person name="Toriumi M.J."/>
            <person name="Chan M.M."/>
            <person name="Tang C.C."/>
            <person name="Onodera C.S."/>
            <person name="Deng J.M."/>
            <person name="Akiyama K."/>
            <person name="Ansari Y."/>
            <person name="Arakawa T."/>
            <person name="Banh J."/>
            <person name="Banno F."/>
            <person name="Bowser L."/>
            <person name="Brooks S.Y."/>
            <person name="Carninci P."/>
            <person name="Chao Q."/>
            <person name="Choy N."/>
            <person name="Enju A."/>
            <person name="Goldsmith A.D."/>
            <person name="Gurjal M."/>
            <person name="Hansen N.F."/>
            <person name="Hayashizaki Y."/>
            <person name="Johnson-Hopson C."/>
            <person name="Hsuan V.W."/>
            <person name="Iida K."/>
            <person name="Karnes M."/>
            <person name="Khan S."/>
            <person name="Koesema E."/>
            <person name="Ishida J."/>
            <person name="Jiang P.X."/>
            <person name="Jones T."/>
            <person name="Kawai J."/>
            <person name="Kamiya A."/>
            <person name="Meyers C."/>
            <person name="Nakajima M."/>
            <person name="Narusaka M."/>
            <person name="Seki M."/>
            <person name="Sakurai T."/>
            <person name="Satou M."/>
            <person name="Tamse R."/>
            <person name="Vaysberg M."/>
            <person name="Wallender E.K."/>
            <person name="Wong C."/>
            <person name="Yamamura Y."/>
            <person name="Yuan S."/>
            <person name="Shinozaki K."/>
            <person name="Davis R.W."/>
            <person name="Theologis A."/>
            <person name="Ecker J.R."/>
        </authorList>
    </citation>
    <scope>NUCLEOTIDE SEQUENCE [LARGE SCALE MRNA] (ISOFORMS 1 AND 2)</scope>
    <source>
        <strain>cv. Columbia</strain>
    </source>
</reference>
<reference key="7">
    <citation type="journal article" date="2000" name="Plant Cell">
        <title>Ozone-sensitive arabidopsis rcd1 mutant reveals opposite roles for ethylene and jasmonate signaling pathways in regulating superoxide-dependent cell death.</title>
        <authorList>
            <person name="Overmyer K."/>
            <person name="Tuominen H."/>
            <person name="Kettunen R."/>
            <person name="Betz C."/>
            <person name="Langebartels C."/>
            <person name="Sandermann H. Jr."/>
            <person name="Kangasjaervi J."/>
        </authorList>
    </citation>
    <scope>FUNCTION</scope>
    <scope>TISSUE SPECIFICITY</scope>
    <scope>INDUCTION BY OZONE</scope>
    <scope>DISRUPTION PHENOTYPE</scope>
</reference>
<reference key="8">
    <citation type="journal article" date="2004" name="Plant Physiol.">
        <title>A methyl viologen-resistant mutant of Arabidopsis, which is allelic to ozone-sensitive rcd1, is tolerant to supplemental ultraviolet-B irradiation.</title>
        <authorList>
            <person name="Fujibe T."/>
            <person name="Saji H."/>
            <person name="Arakawa K."/>
            <person name="Yabe N."/>
            <person name="Takeuchi Y."/>
            <person name="Yamamoto K.T."/>
        </authorList>
    </citation>
    <scope>FUNCTION</scope>
    <scope>DISRUPTION PHENOTYPE</scope>
</reference>
<reference key="9">
    <citation type="journal article" date="2005" name="Plant Physiol.">
        <title>Ozone-induced programmed cell death in the Arabidopsis radical-induced cell death1 mutant.</title>
        <authorList>
            <person name="Overmyer K."/>
            <person name="Brosche M."/>
            <person name="Pellinen R."/>
            <person name="Kuittinen T."/>
            <person name="Tuominen H."/>
            <person name="Ahlfors R."/>
            <person name="Keinaenen M."/>
            <person name="Saarma M."/>
            <person name="Scheel D."/>
            <person name="Kangasjaervi J."/>
        </authorList>
    </citation>
    <scope>FUNCTION</scope>
    <scope>DISRUPTION PHENOTYPE</scope>
</reference>
<reference key="10">
    <citation type="journal article" date="2006" name="Biosci. Biotechnol. Biochem.">
        <title>Overexpression of the RADICAL-INDUCED CELL DEATH1 (RCD1) gene of Arabidopsis causes weak rcd1 phenotype with compromised oxidative-stress responses.</title>
        <authorList>
            <person name="Fujibe T."/>
            <person name="Saji H."/>
            <person name="Watahiki M.K."/>
            <person name="Yamamoto K.T."/>
        </authorList>
    </citation>
    <scope>FUNCTION</scope>
    <scope>SUBCELLULAR LOCATION</scope>
</reference>
<reference key="11">
    <citation type="journal article" date="2009" name="Plant J.">
        <title>Unequally redundant RCD1 and SRO1 mediate stress and developmental responses and interact with transcription factors.</title>
        <authorList>
            <person name="Jaspers P."/>
            <person name="Blomster T."/>
            <person name="Brosche M."/>
            <person name="Salojaervi J."/>
            <person name="Ahlfors R."/>
            <person name="Vainonen J.P."/>
            <person name="Reddy R.A."/>
            <person name="Immink R."/>
            <person name="Angenent G."/>
            <person name="Turck F."/>
            <person name="Overmyer K."/>
            <person name="Kangasjaervi J."/>
        </authorList>
    </citation>
    <scope>FUNCTION</scope>
    <scope>SUBUNIT</scope>
    <scope>SUBCELLULAR LOCATION</scope>
    <scope>TISSUE SPECIFICITY</scope>
    <scope>DISRUPTION PHENOTYPE</scope>
</reference>
<reference key="12">
    <citation type="journal article" date="2009" name="Plant Physiol.">
        <title>The paralogous genes RADICAL-INDUCED CELL DEATH1 and SIMILAR TO RCD ONE1 have partially redundant functions during Arabidopsis development.</title>
        <authorList>
            <person name="Teotia S."/>
            <person name="Lamb R.S."/>
        </authorList>
    </citation>
    <scope>FUNCTION</scope>
</reference>
<reference key="13">
    <citation type="journal article" date="2010" name="BMC Genomics">
        <title>The RST and PARP-like domain containing SRO protein family: analysis of protein structure, function and conservation in land plants.</title>
        <authorList>
            <person name="Jaspers P."/>
            <person name="Overmyer K."/>
            <person name="Wrzaczek M."/>
            <person name="Vainonen J.P."/>
            <person name="Blomster T."/>
            <person name="Salojaervi J."/>
            <person name="Reddy R.A."/>
            <person name="Kangasjaervi J."/>
        </authorList>
    </citation>
    <scope>FUNCTION</scope>
    <scope>INDUCTION</scope>
</reference>
<reference key="14">
    <citation type="journal article" date="2010" name="Planta">
        <title>Salt affects plant Cd-stress responses by modulating growth and Cd accumulation.</title>
        <authorList>
            <person name="Xu J."/>
            <person name="Yin H."/>
            <person name="Liu X."/>
            <person name="Li X."/>
        </authorList>
    </citation>
    <scope>INDUCTION</scope>
</reference>
<reference key="15">
    <citation type="journal article" date="2010" name="Plant Signal. Behav.">
        <title>Radical-induced cell death1 and similar to RCD one1 and the stress-induced morphogenetic response.</title>
        <authorList>
            <person name="Teotia S."/>
            <person name="Muthuswamy S."/>
            <person name="Lamb R.S."/>
        </authorList>
    </citation>
    <scope>DISRUPTION PHENOTYPE</scope>
</reference>
<reference key="16">
    <citation type="journal article" date="2011" name="J. Exp. Bot.">
        <title>RCD1 and SRO1 are necessary to maintain meristematic fate in Arabidopsis thaliana.</title>
        <authorList>
            <person name="Teotia S."/>
            <person name="Lamb R.S."/>
        </authorList>
    </citation>
    <scope>FUNCTION</scope>
    <scope>TISSUE SPECIFICITY</scope>
    <scope>DEVELOPMENTAL STAGE</scope>
    <scope>DISRUPTION PHENOTYPE</scope>
</reference>
<reference key="17">
    <citation type="journal article" date="2015" name="Biochem. J.">
        <title>Protein intrinsic disorder in Arabidopsis NAC transcription factors: transcriptional activation by ANAC013 and ANAC046 and their interactions with RCD1.</title>
        <authorList>
            <person name="O'Shea C."/>
            <person name="Kryger M."/>
            <person name="Stender E.G."/>
            <person name="Kragelund B.B."/>
            <person name="Willemoes M."/>
            <person name="Skriver K."/>
        </authorList>
    </citation>
    <scope>INTERACTION WITH NAC013 AND NAC046</scope>
</reference>
<proteinExistence type="evidence at protein level"/>
<keyword id="KW-0002">3D-structure</keyword>
<keyword id="KW-0025">Alternative splicing</keyword>
<keyword id="KW-0217">Developmental protein</keyword>
<keyword id="KW-0945">Host-virus interaction</keyword>
<keyword id="KW-0539">Nucleus</keyword>
<keyword id="KW-1185">Reference proteome</keyword>
<keyword id="KW-0346">Stress response</keyword>
<gene>
    <name type="primary">RCD1</name>
    <name type="synonym">ATP8</name>
    <name type="synonym">CEO1</name>
    <name type="ordered locus">At1g32230</name>
    <name type="ORF">F3C3.1</name>
</gene>